<feature type="chain" id="PRO_1000143793" description="Large ribosomal subunit protein bL21">
    <location>
        <begin position="1"/>
        <end position="103"/>
    </location>
</feature>
<keyword id="KW-0687">Ribonucleoprotein</keyword>
<keyword id="KW-0689">Ribosomal protein</keyword>
<keyword id="KW-0694">RNA-binding</keyword>
<keyword id="KW-0699">rRNA-binding</keyword>
<organism>
    <name type="scientific">Escherichia coli O17:K52:H18 (strain UMN026 / ExPEC)</name>
    <dbReference type="NCBI Taxonomy" id="585056"/>
    <lineage>
        <taxon>Bacteria</taxon>
        <taxon>Pseudomonadati</taxon>
        <taxon>Pseudomonadota</taxon>
        <taxon>Gammaproteobacteria</taxon>
        <taxon>Enterobacterales</taxon>
        <taxon>Enterobacteriaceae</taxon>
        <taxon>Escherichia</taxon>
    </lineage>
</organism>
<name>RL21_ECOLU</name>
<reference key="1">
    <citation type="journal article" date="2009" name="PLoS Genet.">
        <title>Organised genome dynamics in the Escherichia coli species results in highly diverse adaptive paths.</title>
        <authorList>
            <person name="Touchon M."/>
            <person name="Hoede C."/>
            <person name="Tenaillon O."/>
            <person name="Barbe V."/>
            <person name="Baeriswyl S."/>
            <person name="Bidet P."/>
            <person name="Bingen E."/>
            <person name="Bonacorsi S."/>
            <person name="Bouchier C."/>
            <person name="Bouvet O."/>
            <person name="Calteau A."/>
            <person name="Chiapello H."/>
            <person name="Clermont O."/>
            <person name="Cruveiller S."/>
            <person name="Danchin A."/>
            <person name="Diard M."/>
            <person name="Dossat C."/>
            <person name="Karoui M.E."/>
            <person name="Frapy E."/>
            <person name="Garry L."/>
            <person name="Ghigo J.M."/>
            <person name="Gilles A.M."/>
            <person name="Johnson J."/>
            <person name="Le Bouguenec C."/>
            <person name="Lescat M."/>
            <person name="Mangenot S."/>
            <person name="Martinez-Jehanne V."/>
            <person name="Matic I."/>
            <person name="Nassif X."/>
            <person name="Oztas S."/>
            <person name="Petit M.A."/>
            <person name="Pichon C."/>
            <person name="Rouy Z."/>
            <person name="Ruf C.S."/>
            <person name="Schneider D."/>
            <person name="Tourret J."/>
            <person name="Vacherie B."/>
            <person name="Vallenet D."/>
            <person name="Medigue C."/>
            <person name="Rocha E.P.C."/>
            <person name="Denamur E."/>
        </authorList>
    </citation>
    <scope>NUCLEOTIDE SEQUENCE [LARGE SCALE GENOMIC DNA]</scope>
    <source>
        <strain>UMN026 / ExPEC</strain>
    </source>
</reference>
<evidence type="ECO:0000255" key="1">
    <source>
        <dbReference type="HAMAP-Rule" id="MF_01363"/>
    </source>
</evidence>
<evidence type="ECO:0000305" key="2"/>
<gene>
    <name evidence="1" type="primary">rplU</name>
    <name type="ordered locus">ECUMN_3666</name>
</gene>
<accession>B7NDH0</accession>
<dbReference type="EMBL" id="CU928163">
    <property type="protein sequence ID" value="CAR14820.1"/>
    <property type="molecule type" value="Genomic_DNA"/>
</dbReference>
<dbReference type="RefSeq" id="WP_000271401.1">
    <property type="nucleotide sequence ID" value="NC_011751.1"/>
</dbReference>
<dbReference type="RefSeq" id="YP_002414325.1">
    <property type="nucleotide sequence ID" value="NC_011751.1"/>
</dbReference>
<dbReference type="SMR" id="B7NDH0"/>
<dbReference type="STRING" id="585056.ECUMN_3666"/>
<dbReference type="GeneID" id="93778795"/>
<dbReference type="KEGG" id="eum:ECUMN_3666"/>
<dbReference type="PATRIC" id="fig|585056.7.peg.3846"/>
<dbReference type="HOGENOM" id="CLU_061463_3_3_6"/>
<dbReference type="Proteomes" id="UP000007097">
    <property type="component" value="Chromosome"/>
</dbReference>
<dbReference type="GO" id="GO:0005737">
    <property type="term" value="C:cytoplasm"/>
    <property type="evidence" value="ECO:0007669"/>
    <property type="project" value="UniProtKB-ARBA"/>
</dbReference>
<dbReference type="GO" id="GO:1990904">
    <property type="term" value="C:ribonucleoprotein complex"/>
    <property type="evidence" value="ECO:0007669"/>
    <property type="project" value="UniProtKB-KW"/>
</dbReference>
<dbReference type="GO" id="GO:0005840">
    <property type="term" value="C:ribosome"/>
    <property type="evidence" value="ECO:0007669"/>
    <property type="project" value="UniProtKB-KW"/>
</dbReference>
<dbReference type="GO" id="GO:0019843">
    <property type="term" value="F:rRNA binding"/>
    <property type="evidence" value="ECO:0007669"/>
    <property type="project" value="UniProtKB-UniRule"/>
</dbReference>
<dbReference type="GO" id="GO:0003735">
    <property type="term" value="F:structural constituent of ribosome"/>
    <property type="evidence" value="ECO:0007669"/>
    <property type="project" value="InterPro"/>
</dbReference>
<dbReference type="GO" id="GO:0006412">
    <property type="term" value="P:translation"/>
    <property type="evidence" value="ECO:0007669"/>
    <property type="project" value="UniProtKB-UniRule"/>
</dbReference>
<dbReference type="HAMAP" id="MF_01363">
    <property type="entry name" value="Ribosomal_bL21"/>
    <property type="match status" value="1"/>
</dbReference>
<dbReference type="InterPro" id="IPR028909">
    <property type="entry name" value="bL21-like"/>
</dbReference>
<dbReference type="InterPro" id="IPR036164">
    <property type="entry name" value="bL21-like_sf"/>
</dbReference>
<dbReference type="InterPro" id="IPR001787">
    <property type="entry name" value="Ribosomal_bL21"/>
</dbReference>
<dbReference type="InterPro" id="IPR018258">
    <property type="entry name" value="Ribosomal_bL21_CS"/>
</dbReference>
<dbReference type="NCBIfam" id="TIGR00061">
    <property type="entry name" value="L21"/>
    <property type="match status" value="1"/>
</dbReference>
<dbReference type="PANTHER" id="PTHR21349">
    <property type="entry name" value="50S RIBOSOMAL PROTEIN L21"/>
    <property type="match status" value="1"/>
</dbReference>
<dbReference type="PANTHER" id="PTHR21349:SF0">
    <property type="entry name" value="LARGE RIBOSOMAL SUBUNIT PROTEIN BL21M"/>
    <property type="match status" value="1"/>
</dbReference>
<dbReference type="Pfam" id="PF00829">
    <property type="entry name" value="Ribosomal_L21p"/>
    <property type="match status" value="1"/>
</dbReference>
<dbReference type="SUPFAM" id="SSF141091">
    <property type="entry name" value="L21p-like"/>
    <property type="match status" value="1"/>
</dbReference>
<dbReference type="PROSITE" id="PS01169">
    <property type="entry name" value="RIBOSOMAL_L21"/>
    <property type="match status" value="1"/>
</dbReference>
<sequence>MYAVFQSGGKQHRVSEGQTVRLEKLDIATGETVEFAEVLMIANGEEVKIGVPFVDGGVIKAEVVAHGRGEKVKIVKFRRRKHYRKQQGHRQWFTDVKITGISA</sequence>
<comment type="function">
    <text evidence="1">This protein binds to 23S rRNA in the presence of protein L20.</text>
</comment>
<comment type="subunit">
    <text evidence="1">Part of the 50S ribosomal subunit. Contacts protein L20.</text>
</comment>
<comment type="similarity">
    <text evidence="1">Belongs to the bacterial ribosomal protein bL21 family.</text>
</comment>
<protein>
    <recommendedName>
        <fullName evidence="1">Large ribosomal subunit protein bL21</fullName>
    </recommendedName>
    <alternativeName>
        <fullName evidence="2">50S ribosomal protein L21</fullName>
    </alternativeName>
</protein>
<proteinExistence type="inferred from homology"/>